<name>TSAC_STRMK</name>
<sequence length="186" mass="19843">MKELTLDSAVATLRAGGVIAYPTEAVWGLGCDPSHEAAVHMVLRLKQRPIEKGMILVAADLAQLEGWVRLQALPDARQRAVLASWPGANTWILPAGPRAQPWVTGEHSGIAVRISAHPLVAELCRAWGGPLVSTSANLAGEPPARRREELDPRLLRLLDGILDGETGGLAQPTPIRDALSGNVLRS</sequence>
<organism>
    <name type="scientific">Stenotrophomonas maltophilia (strain K279a)</name>
    <dbReference type="NCBI Taxonomy" id="522373"/>
    <lineage>
        <taxon>Bacteria</taxon>
        <taxon>Pseudomonadati</taxon>
        <taxon>Pseudomonadota</taxon>
        <taxon>Gammaproteobacteria</taxon>
        <taxon>Lysobacterales</taxon>
        <taxon>Lysobacteraceae</taxon>
        <taxon>Stenotrophomonas</taxon>
        <taxon>Stenotrophomonas maltophilia group</taxon>
    </lineage>
</organism>
<evidence type="ECO:0000255" key="1">
    <source>
        <dbReference type="HAMAP-Rule" id="MF_01852"/>
    </source>
</evidence>
<keyword id="KW-0067">ATP-binding</keyword>
<keyword id="KW-0963">Cytoplasm</keyword>
<keyword id="KW-0547">Nucleotide-binding</keyword>
<keyword id="KW-0548">Nucleotidyltransferase</keyword>
<keyword id="KW-1185">Reference proteome</keyword>
<keyword id="KW-0808">Transferase</keyword>
<keyword id="KW-0819">tRNA processing</keyword>
<comment type="function">
    <text evidence="1">Required for the formation of a threonylcarbamoyl group on adenosine at position 37 (t(6)A37) in tRNAs that read codons beginning with adenine. Catalyzes the conversion of L-threonine, HCO(3)(-)/CO(2) and ATP to give threonylcarbamoyl-AMP (TC-AMP) as the acyladenylate intermediate, with the release of diphosphate.</text>
</comment>
<comment type="catalytic activity">
    <reaction evidence="1">
        <text>L-threonine + hydrogencarbonate + ATP = L-threonylcarbamoyladenylate + diphosphate + H2O</text>
        <dbReference type="Rhea" id="RHEA:36407"/>
        <dbReference type="ChEBI" id="CHEBI:15377"/>
        <dbReference type="ChEBI" id="CHEBI:17544"/>
        <dbReference type="ChEBI" id="CHEBI:30616"/>
        <dbReference type="ChEBI" id="CHEBI:33019"/>
        <dbReference type="ChEBI" id="CHEBI:57926"/>
        <dbReference type="ChEBI" id="CHEBI:73682"/>
        <dbReference type="EC" id="2.7.7.87"/>
    </reaction>
</comment>
<comment type="subcellular location">
    <subcellularLocation>
        <location evidence="1">Cytoplasm</location>
    </subcellularLocation>
</comment>
<comment type="similarity">
    <text evidence="1">Belongs to the SUA5 family. TsaC subfamily.</text>
</comment>
<accession>B2FIS1</accession>
<proteinExistence type="inferred from homology"/>
<reference key="1">
    <citation type="journal article" date="2008" name="Genome Biol.">
        <title>The complete genome, comparative and functional analysis of Stenotrophomonas maltophilia reveals an organism heavily shielded by drug resistance determinants.</title>
        <authorList>
            <person name="Crossman L.C."/>
            <person name="Gould V.C."/>
            <person name="Dow J.M."/>
            <person name="Vernikos G.S."/>
            <person name="Okazaki A."/>
            <person name="Sebaihia M."/>
            <person name="Saunders D."/>
            <person name="Arrowsmith C."/>
            <person name="Carver T."/>
            <person name="Peters N."/>
            <person name="Adlem E."/>
            <person name="Kerhornou A."/>
            <person name="Lord A."/>
            <person name="Murphy L."/>
            <person name="Seeger K."/>
            <person name="Squares R."/>
            <person name="Rutter S."/>
            <person name="Quail M.A."/>
            <person name="Rajandream M.A."/>
            <person name="Harris D."/>
            <person name="Churcher C."/>
            <person name="Bentley S.D."/>
            <person name="Parkhill J."/>
            <person name="Thomson N.R."/>
            <person name="Avison M.B."/>
        </authorList>
    </citation>
    <scope>NUCLEOTIDE SEQUENCE [LARGE SCALE GENOMIC DNA]</scope>
    <source>
        <strain>K279a</strain>
    </source>
</reference>
<dbReference type="EC" id="2.7.7.87" evidence="1"/>
<dbReference type="EMBL" id="AM743169">
    <property type="protein sequence ID" value="CAQ47576.1"/>
    <property type="molecule type" value="Genomic_DNA"/>
</dbReference>
<dbReference type="SMR" id="B2FIS1"/>
<dbReference type="EnsemblBacteria" id="CAQ47576">
    <property type="protein sequence ID" value="CAQ47576"/>
    <property type="gene ID" value="Smlt4185"/>
</dbReference>
<dbReference type="KEGG" id="sml:Smlt4185"/>
<dbReference type="eggNOG" id="COG0009">
    <property type="taxonomic scope" value="Bacteria"/>
</dbReference>
<dbReference type="HOGENOM" id="CLU_031397_6_0_6"/>
<dbReference type="Proteomes" id="UP000008840">
    <property type="component" value="Chromosome"/>
</dbReference>
<dbReference type="GO" id="GO:0005737">
    <property type="term" value="C:cytoplasm"/>
    <property type="evidence" value="ECO:0007669"/>
    <property type="project" value="UniProtKB-SubCell"/>
</dbReference>
<dbReference type="GO" id="GO:0005524">
    <property type="term" value="F:ATP binding"/>
    <property type="evidence" value="ECO:0007669"/>
    <property type="project" value="UniProtKB-UniRule"/>
</dbReference>
<dbReference type="GO" id="GO:0003725">
    <property type="term" value="F:double-stranded RNA binding"/>
    <property type="evidence" value="ECO:0007669"/>
    <property type="project" value="InterPro"/>
</dbReference>
<dbReference type="GO" id="GO:0061710">
    <property type="term" value="F:L-threonylcarbamoyladenylate synthase"/>
    <property type="evidence" value="ECO:0007669"/>
    <property type="project" value="UniProtKB-EC"/>
</dbReference>
<dbReference type="GO" id="GO:0000049">
    <property type="term" value="F:tRNA binding"/>
    <property type="evidence" value="ECO:0007669"/>
    <property type="project" value="TreeGrafter"/>
</dbReference>
<dbReference type="GO" id="GO:0006450">
    <property type="term" value="P:regulation of translational fidelity"/>
    <property type="evidence" value="ECO:0007669"/>
    <property type="project" value="TreeGrafter"/>
</dbReference>
<dbReference type="GO" id="GO:0002949">
    <property type="term" value="P:tRNA threonylcarbamoyladenosine modification"/>
    <property type="evidence" value="ECO:0007669"/>
    <property type="project" value="UniProtKB-UniRule"/>
</dbReference>
<dbReference type="FunFam" id="3.90.870.10:FF:000004">
    <property type="entry name" value="Threonylcarbamoyl-AMP synthase"/>
    <property type="match status" value="1"/>
</dbReference>
<dbReference type="Gene3D" id="3.90.870.10">
    <property type="entry name" value="DHBP synthase"/>
    <property type="match status" value="1"/>
</dbReference>
<dbReference type="HAMAP" id="MF_01852">
    <property type="entry name" value="TsaC"/>
    <property type="match status" value="1"/>
</dbReference>
<dbReference type="InterPro" id="IPR017945">
    <property type="entry name" value="DHBP_synth_RibB-like_a/b_dom"/>
</dbReference>
<dbReference type="InterPro" id="IPR006070">
    <property type="entry name" value="Sua5-like_dom"/>
</dbReference>
<dbReference type="InterPro" id="IPR023535">
    <property type="entry name" value="TC-AMP_synthase"/>
</dbReference>
<dbReference type="InterPro" id="IPR050156">
    <property type="entry name" value="TC-AMP_synthase_SUA5"/>
</dbReference>
<dbReference type="PANTHER" id="PTHR17490">
    <property type="entry name" value="SUA5"/>
    <property type="match status" value="1"/>
</dbReference>
<dbReference type="PANTHER" id="PTHR17490:SF18">
    <property type="entry name" value="THREONYLCARBAMOYL-AMP SYNTHASE"/>
    <property type="match status" value="1"/>
</dbReference>
<dbReference type="Pfam" id="PF01300">
    <property type="entry name" value="Sua5_yciO_yrdC"/>
    <property type="match status" value="1"/>
</dbReference>
<dbReference type="SUPFAM" id="SSF55821">
    <property type="entry name" value="YrdC/RibB"/>
    <property type="match status" value="1"/>
</dbReference>
<dbReference type="PROSITE" id="PS51163">
    <property type="entry name" value="YRDC"/>
    <property type="match status" value="1"/>
</dbReference>
<feature type="chain" id="PRO_0000352998" description="Threonylcarbamoyl-AMP synthase">
    <location>
        <begin position="1"/>
        <end position="186"/>
    </location>
</feature>
<feature type="domain" description="YrdC-like" evidence="1">
    <location>
        <begin position="3"/>
        <end position="186"/>
    </location>
</feature>
<gene>
    <name evidence="1" type="primary">tsaC</name>
    <name type="synonym">rimN</name>
    <name type="ordered locus">Smlt4185</name>
</gene>
<protein>
    <recommendedName>
        <fullName evidence="1">Threonylcarbamoyl-AMP synthase</fullName>
        <shortName evidence="1">TC-AMP synthase</shortName>
        <ecNumber evidence="1">2.7.7.87</ecNumber>
    </recommendedName>
    <alternativeName>
        <fullName evidence="1">L-threonylcarbamoyladenylate synthase</fullName>
    </alternativeName>
    <alternativeName>
        <fullName evidence="1">t(6)A37 threonylcarbamoyladenosine biosynthesis protein TsaC</fullName>
    </alternativeName>
    <alternativeName>
        <fullName evidence="1">tRNA threonylcarbamoyladenosine biosynthesis protein TsaC</fullName>
    </alternativeName>
</protein>